<comment type="function">
    <text evidence="1 6 7">Acts as a negative growth regulator via p53-mediated apoptosis pathway. Regulates formation of degradative autolysosomes during autophagy (By similarity).</text>
</comment>
<comment type="subunit">
    <text evidence="7">Interacts with BCL2.</text>
</comment>
<comment type="subcellular location">
    <subcellularLocation>
        <location evidence="1">Nucleus membrane</location>
        <topology evidence="1">Multi-pass membrane protein</topology>
    </subcellularLocation>
    <subcellularLocation>
        <location evidence="1">Cytoplasm</location>
    </subcellularLocation>
    <subcellularLocation>
        <location evidence="7">Endoplasmic reticulum membrane</location>
        <topology evidence="7">Multi-pass membrane protein</topology>
    </subcellularLocation>
</comment>
<comment type="tissue specificity">
    <text>Found in all the examined tissues. High expression was found in liver, skeletal muscle, pancreas, kidney heart and to a lesser extent in brain, placenta and lung.</text>
</comment>
<comment type="induction">
    <text evidence="6 8">By etoposide treatment, induction requires p53. Etoposide induces DNA damage in cells by inhibiting DNA topoisomerase II, and ultimately causes apoptotic cell death.</text>
</comment>
<comment type="similarity">
    <text evidence="9">Belongs to the EI24 family.</text>
</comment>
<comment type="sequence caution" evidence="9">
    <conflict type="erroneous initiation">
        <sequence resource="EMBL-CDS" id="AAC52483"/>
    </conflict>
    <text>Extended N-terminus.</text>
</comment>
<comment type="sequence caution" evidence="9">
    <conflict type="erroneous initiation">
        <sequence resource="EMBL-CDS" id="BAE28130"/>
    </conflict>
    <text>Extended N-terminus.</text>
</comment>
<comment type="sequence caution" evidence="9">
    <conflict type="erroneous initiation">
        <sequence resource="EMBL-CDS" id="BAE35489"/>
    </conflict>
    <text>Extended N-terminus.</text>
</comment>
<comment type="sequence caution" evidence="9">
    <conflict type="erroneous initiation">
        <sequence resource="EMBL-CDS" id="BAE42899"/>
    </conflict>
    <text>Extended N-terminus.</text>
</comment>
<protein>
    <recommendedName>
        <fullName>Etoposide-induced protein 2.4</fullName>
    </recommendedName>
    <alternativeName>
        <fullName>p53-induced gene 8 protein</fullName>
    </alternativeName>
</protein>
<feature type="initiator methionine" description="Removed" evidence="2">
    <location>
        <position position="1"/>
    </location>
</feature>
<feature type="chain" id="PRO_0000086946" description="Etoposide-induced protein 2.4">
    <location>
        <begin position="2"/>
        <end position="340"/>
    </location>
</feature>
<feature type="transmembrane region" description="Helical" evidence="4">
    <location>
        <begin position="77"/>
        <end position="97"/>
    </location>
</feature>
<feature type="transmembrane region" description="Helical" evidence="4">
    <location>
        <begin position="117"/>
        <end position="137"/>
    </location>
</feature>
<feature type="transmembrane region" description="Helical" evidence="4">
    <location>
        <begin position="179"/>
        <end position="199"/>
    </location>
</feature>
<feature type="transmembrane region" description="Helical" evidence="4">
    <location>
        <begin position="238"/>
        <end position="255"/>
    </location>
</feature>
<feature type="transmembrane region" description="Helical" evidence="4">
    <location>
        <begin position="257"/>
        <end position="277"/>
    </location>
</feature>
<feature type="region of interest" description="Interaction with BH3 domain of BCL2">
    <location>
        <begin position="52"/>
        <end position="115"/>
    </location>
</feature>
<feature type="region of interest" description="Disordered" evidence="5">
    <location>
        <begin position="319"/>
        <end position="340"/>
    </location>
</feature>
<feature type="modified residue" description="N-acetylalanine" evidence="2">
    <location>
        <position position="2"/>
    </location>
</feature>
<feature type="modified residue" description="Phosphoserine" evidence="3">
    <location>
        <position position="46"/>
    </location>
</feature>
<feature type="modified residue" description="Phosphoserine" evidence="3">
    <location>
        <position position="47"/>
    </location>
</feature>
<feature type="modified residue" description="Phosphoserine" evidence="10">
    <location>
        <position position="56"/>
    </location>
</feature>
<feature type="modified residue" description="Phosphoserine" evidence="12">
    <location>
        <position position="320"/>
    </location>
</feature>
<feature type="modified residue" description="Phosphoserine" evidence="11 12">
    <location>
        <position position="326"/>
    </location>
</feature>
<feature type="modified residue" description="Phosphoserine" evidence="12">
    <location>
        <position position="330"/>
    </location>
</feature>
<feature type="sequence conflict" description="In Ref. 3; BAE28130." evidence="9" ref="3">
    <original>N</original>
    <variation>D</variation>
    <location>
        <position position="78"/>
    </location>
</feature>
<feature type="sequence conflict" description="In Ref. 3; BAE35489." evidence="9" ref="3">
    <original>I</original>
    <variation>F</variation>
    <location>
        <position position="144"/>
    </location>
</feature>
<feature type="sequence conflict" description="In Ref. 3; BAE42899." evidence="9" ref="3">
    <original>S</original>
    <variation>P</variation>
    <location>
        <position position="320"/>
    </location>
</feature>
<evidence type="ECO:0000250" key="1"/>
<evidence type="ECO:0000250" key="2">
    <source>
        <dbReference type="UniProtKB" id="O14681"/>
    </source>
</evidence>
<evidence type="ECO:0000250" key="3">
    <source>
        <dbReference type="UniProtKB" id="Q4KM77"/>
    </source>
</evidence>
<evidence type="ECO:0000255" key="4"/>
<evidence type="ECO:0000256" key="5">
    <source>
        <dbReference type="SAM" id="MobiDB-lite"/>
    </source>
</evidence>
<evidence type="ECO:0000269" key="6">
    <source>
    </source>
</evidence>
<evidence type="ECO:0000269" key="7">
    <source>
    </source>
</evidence>
<evidence type="ECO:0000269" key="8">
    <source>
    </source>
</evidence>
<evidence type="ECO:0000305" key="9"/>
<evidence type="ECO:0007744" key="10">
    <source>
    </source>
</evidence>
<evidence type="ECO:0007744" key="11">
    <source>
    </source>
</evidence>
<evidence type="ECO:0007744" key="12">
    <source>
    </source>
</evidence>
<keyword id="KW-0007">Acetylation</keyword>
<keyword id="KW-0053">Apoptosis</keyword>
<keyword id="KW-0072">Autophagy</keyword>
<keyword id="KW-0963">Cytoplasm</keyword>
<keyword id="KW-0256">Endoplasmic reticulum</keyword>
<keyword id="KW-0472">Membrane</keyword>
<keyword id="KW-0539">Nucleus</keyword>
<keyword id="KW-0597">Phosphoprotein</keyword>
<keyword id="KW-1185">Reference proteome</keyword>
<keyword id="KW-0812">Transmembrane</keyword>
<keyword id="KW-1133">Transmembrane helix</keyword>
<dbReference type="EMBL" id="U41751">
    <property type="protein sequence ID" value="AAC52483.2"/>
    <property type="status" value="ALT_INIT"/>
    <property type="molecule type" value="mRNA"/>
</dbReference>
<dbReference type="EMBL" id="AK147776">
    <property type="protein sequence ID" value="BAE28130.1"/>
    <property type="status" value="ALT_INIT"/>
    <property type="molecule type" value="mRNA"/>
</dbReference>
<dbReference type="EMBL" id="AK159927">
    <property type="protein sequence ID" value="BAE35489.1"/>
    <property type="status" value="ALT_INIT"/>
    <property type="molecule type" value="mRNA"/>
</dbReference>
<dbReference type="EMBL" id="AK172233">
    <property type="protein sequence ID" value="BAE42899.1"/>
    <property type="status" value="ALT_INIT"/>
    <property type="molecule type" value="mRNA"/>
</dbReference>
<dbReference type="CCDS" id="CCDS22973.2"/>
<dbReference type="RefSeq" id="NP_001186423.2">
    <property type="nucleotide sequence ID" value="NM_001199494.3"/>
</dbReference>
<dbReference type="RefSeq" id="NP_001420127.1">
    <property type="nucleotide sequence ID" value="NM_001433198.1"/>
</dbReference>
<dbReference type="RefSeq" id="NP_031941.2">
    <property type="nucleotide sequence ID" value="NM_007915.7"/>
</dbReference>
<dbReference type="BioGRID" id="199410">
    <property type="interactions" value="3"/>
</dbReference>
<dbReference type="FunCoup" id="Q61070">
    <property type="interactions" value="2558"/>
</dbReference>
<dbReference type="STRING" id="10090.ENSMUSP00000110738"/>
<dbReference type="iPTMnet" id="Q61070"/>
<dbReference type="PhosphoSitePlus" id="Q61070"/>
<dbReference type="jPOST" id="Q61070"/>
<dbReference type="PaxDb" id="10090-ENSMUSP00000132270"/>
<dbReference type="PeptideAtlas" id="Q61070"/>
<dbReference type="ProteomicsDB" id="277838"/>
<dbReference type="Pumba" id="Q61070"/>
<dbReference type="Antibodypedia" id="32951">
    <property type="antibodies" value="169 antibodies from 31 providers"/>
</dbReference>
<dbReference type="DNASU" id="13663"/>
<dbReference type="Ensembl" id="ENSMUST00000163192.11">
    <property type="protein sequence ID" value="ENSMUSP00000132270.4"/>
    <property type="gene ID" value="ENSMUSG00000062762.18"/>
</dbReference>
<dbReference type="Ensembl" id="ENSMUST00000238932.2">
    <property type="protein sequence ID" value="ENSMUSP00000159090.2"/>
    <property type="gene ID" value="ENSMUSG00000062762.18"/>
</dbReference>
<dbReference type="GeneID" id="13663"/>
<dbReference type="KEGG" id="mmu:13663"/>
<dbReference type="UCSC" id="uc009oua.2">
    <property type="organism name" value="mouse"/>
</dbReference>
<dbReference type="AGR" id="MGI:108090"/>
<dbReference type="CTD" id="9538"/>
<dbReference type="MGI" id="MGI:108090">
    <property type="gene designation" value="Ei24"/>
</dbReference>
<dbReference type="VEuPathDB" id="HostDB:ENSMUSG00000062762"/>
<dbReference type="eggNOG" id="KOG3966">
    <property type="taxonomic scope" value="Eukaryota"/>
</dbReference>
<dbReference type="GeneTree" id="ENSGT00390000018633"/>
<dbReference type="InParanoid" id="Q61070"/>
<dbReference type="OMA" id="HMCLLYA"/>
<dbReference type="OrthoDB" id="266518at2759"/>
<dbReference type="PhylomeDB" id="Q61070"/>
<dbReference type="TreeFam" id="TF314441"/>
<dbReference type="BioGRID-ORCS" id="13663">
    <property type="hits" value="22 hits in 79 CRISPR screens"/>
</dbReference>
<dbReference type="ChiTaRS" id="Ei24">
    <property type="organism name" value="mouse"/>
</dbReference>
<dbReference type="PRO" id="PR:Q61070"/>
<dbReference type="Proteomes" id="UP000000589">
    <property type="component" value="Chromosome 9"/>
</dbReference>
<dbReference type="RNAct" id="Q61070">
    <property type="molecule type" value="protein"/>
</dbReference>
<dbReference type="Bgee" id="ENSMUSG00000062762">
    <property type="expression patterns" value="Expressed in cleaving embryo and 258 other cell types or tissues"/>
</dbReference>
<dbReference type="ExpressionAtlas" id="Q61070">
    <property type="expression patterns" value="baseline and differential"/>
</dbReference>
<dbReference type="GO" id="GO:0005829">
    <property type="term" value="C:cytosol"/>
    <property type="evidence" value="ECO:0007669"/>
    <property type="project" value="Ensembl"/>
</dbReference>
<dbReference type="GO" id="GO:0005789">
    <property type="term" value="C:endoplasmic reticulum membrane"/>
    <property type="evidence" value="ECO:0007669"/>
    <property type="project" value="UniProtKB-SubCell"/>
</dbReference>
<dbReference type="GO" id="GO:0005794">
    <property type="term" value="C:Golgi apparatus"/>
    <property type="evidence" value="ECO:0007669"/>
    <property type="project" value="Ensembl"/>
</dbReference>
<dbReference type="GO" id="GO:0031965">
    <property type="term" value="C:nuclear membrane"/>
    <property type="evidence" value="ECO:0007669"/>
    <property type="project" value="UniProtKB-SubCell"/>
</dbReference>
<dbReference type="GO" id="GO:0061676">
    <property type="term" value="F:importin-alpha family protein binding"/>
    <property type="evidence" value="ECO:0000266"/>
    <property type="project" value="MGI"/>
</dbReference>
<dbReference type="GO" id="GO:0006914">
    <property type="term" value="P:autophagy"/>
    <property type="evidence" value="ECO:0000315"/>
    <property type="project" value="MGI"/>
</dbReference>
<dbReference type="GO" id="GO:0071494">
    <property type="term" value="P:cellular response to UV-C"/>
    <property type="evidence" value="ECO:0000316"/>
    <property type="project" value="MGI"/>
</dbReference>
<dbReference type="GO" id="GO:0008630">
    <property type="term" value="P:intrinsic apoptotic signaling pathway in response to DNA damage"/>
    <property type="evidence" value="ECO:0000314"/>
    <property type="project" value="MGI"/>
</dbReference>
<dbReference type="GO" id="GO:0030308">
    <property type="term" value="P:negative regulation of cell growth"/>
    <property type="evidence" value="ECO:0000250"/>
    <property type="project" value="MGI"/>
</dbReference>
<dbReference type="GO" id="GO:0042308">
    <property type="term" value="P:negative regulation of protein import into nucleus"/>
    <property type="evidence" value="ECO:0000314"/>
    <property type="project" value="MGI"/>
</dbReference>
<dbReference type="GO" id="GO:0050885">
    <property type="term" value="P:neuromuscular process controlling balance"/>
    <property type="evidence" value="ECO:0000315"/>
    <property type="project" value="MGI"/>
</dbReference>
<dbReference type="GO" id="GO:2001244">
    <property type="term" value="P:positive regulation of intrinsic apoptotic signaling pathway"/>
    <property type="evidence" value="ECO:0000315"/>
    <property type="project" value="MGI"/>
</dbReference>
<dbReference type="GO" id="GO:0009410">
    <property type="term" value="P:response to xenobiotic stimulus"/>
    <property type="evidence" value="ECO:0000315"/>
    <property type="project" value="MGI"/>
</dbReference>
<dbReference type="PANTHER" id="PTHR21389:SF0">
    <property type="entry name" value="ETOPOSIDE-INDUCED PROTEIN 2.4 HOMOLOG"/>
    <property type="match status" value="1"/>
</dbReference>
<dbReference type="PANTHER" id="PTHR21389">
    <property type="entry name" value="P53 INDUCED PROTEIN"/>
    <property type="match status" value="1"/>
</dbReference>
<dbReference type="Pfam" id="PF07264">
    <property type="entry name" value="EI24"/>
    <property type="match status" value="1"/>
</dbReference>
<name>EI24_MOUSE</name>
<accession>Q61070</accession>
<accession>Q3T9X1</accession>
<accession>Q3TVX9</accession>
<accession>Q3UGS7</accession>
<proteinExistence type="evidence at protein level"/>
<reference key="1">
    <citation type="journal article" date="1996" name="Oncogene">
        <title>Identification and cloning of EI24, a gene induced by p53 in etoposide-treated cells.</title>
        <authorList>
            <person name="Lehar S.M."/>
            <person name="Nacht M."/>
            <person name="Jacks T."/>
            <person name="Vater C.A."/>
            <person name="Chittenden T."/>
            <person name="Guild B.C."/>
        </authorList>
    </citation>
    <scope>NUCLEOTIDE SEQUENCE [MRNA]</scope>
    <scope>INDUCTION</scope>
    <source>
        <tissue>Fibroblast</tissue>
    </source>
</reference>
<reference key="2">
    <citation type="journal article" date="2000" name="Mol. Cell. Biol.">
        <title>ei24, a p53 response gene involved in growth suppression and apoptosis.</title>
        <authorList>
            <person name="Gu Z."/>
            <person name="Flemington C."/>
            <person name="Chittenden T."/>
            <person name="Zambetti G.P."/>
        </authorList>
    </citation>
    <scope>NUCLEOTIDE SEQUENCE [MRNA]</scope>
    <scope>FUNCTION</scope>
    <scope>INDUCTION</scope>
</reference>
<reference key="3">
    <citation type="journal article" date="2005" name="Science">
        <title>The transcriptional landscape of the mammalian genome.</title>
        <authorList>
            <person name="Carninci P."/>
            <person name="Kasukawa T."/>
            <person name="Katayama S."/>
            <person name="Gough J."/>
            <person name="Frith M.C."/>
            <person name="Maeda N."/>
            <person name="Oyama R."/>
            <person name="Ravasi T."/>
            <person name="Lenhard B."/>
            <person name="Wells C."/>
            <person name="Kodzius R."/>
            <person name="Shimokawa K."/>
            <person name="Bajic V.B."/>
            <person name="Brenner S.E."/>
            <person name="Batalov S."/>
            <person name="Forrest A.R."/>
            <person name="Zavolan M."/>
            <person name="Davis M.J."/>
            <person name="Wilming L.G."/>
            <person name="Aidinis V."/>
            <person name="Allen J.E."/>
            <person name="Ambesi-Impiombato A."/>
            <person name="Apweiler R."/>
            <person name="Aturaliya R.N."/>
            <person name="Bailey T.L."/>
            <person name="Bansal M."/>
            <person name="Baxter L."/>
            <person name="Beisel K.W."/>
            <person name="Bersano T."/>
            <person name="Bono H."/>
            <person name="Chalk A.M."/>
            <person name="Chiu K.P."/>
            <person name="Choudhary V."/>
            <person name="Christoffels A."/>
            <person name="Clutterbuck D.R."/>
            <person name="Crowe M.L."/>
            <person name="Dalla E."/>
            <person name="Dalrymple B.P."/>
            <person name="de Bono B."/>
            <person name="Della Gatta G."/>
            <person name="di Bernardo D."/>
            <person name="Down T."/>
            <person name="Engstrom P."/>
            <person name="Fagiolini M."/>
            <person name="Faulkner G."/>
            <person name="Fletcher C.F."/>
            <person name="Fukushima T."/>
            <person name="Furuno M."/>
            <person name="Futaki S."/>
            <person name="Gariboldi M."/>
            <person name="Georgii-Hemming P."/>
            <person name="Gingeras T.R."/>
            <person name="Gojobori T."/>
            <person name="Green R.E."/>
            <person name="Gustincich S."/>
            <person name="Harbers M."/>
            <person name="Hayashi Y."/>
            <person name="Hensch T.K."/>
            <person name="Hirokawa N."/>
            <person name="Hill D."/>
            <person name="Huminiecki L."/>
            <person name="Iacono M."/>
            <person name="Ikeo K."/>
            <person name="Iwama A."/>
            <person name="Ishikawa T."/>
            <person name="Jakt M."/>
            <person name="Kanapin A."/>
            <person name="Katoh M."/>
            <person name="Kawasawa Y."/>
            <person name="Kelso J."/>
            <person name="Kitamura H."/>
            <person name="Kitano H."/>
            <person name="Kollias G."/>
            <person name="Krishnan S.P."/>
            <person name="Kruger A."/>
            <person name="Kummerfeld S.K."/>
            <person name="Kurochkin I.V."/>
            <person name="Lareau L.F."/>
            <person name="Lazarevic D."/>
            <person name="Lipovich L."/>
            <person name="Liu J."/>
            <person name="Liuni S."/>
            <person name="McWilliam S."/>
            <person name="Madan Babu M."/>
            <person name="Madera M."/>
            <person name="Marchionni L."/>
            <person name="Matsuda H."/>
            <person name="Matsuzawa S."/>
            <person name="Miki H."/>
            <person name="Mignone F."/>
            <person name="Miyake S."/>
            <person name="Morris K."/>
            <person name="Mottagui-Tabar S."/>
            <person name="Mulder N."/>
            <person name="Nakano N."/>
            <person name="Nakauchi H."/>
            <person name="Ng P."/>
            <person name="Nilsson R."/>
            <person name="Nishiguchi S."/>
            <person name="Nishikawa S."/>
            <person name="Nori F."/>
            <person name="Ohara O."/>
            <person name="Okazaki Y."/>
            <person name="Orlando V."/>
            <person name="Pang K.C."/>
            <person name="Pavan W.J."/>
            <person name="Pavesi G."/>
            <person name="Pesole G."/>
            <person name="Petrovsky N."/>
            <person name="Piazza S."/>
            <person name="Reed J."/>
            <person name="Reid J.F."/>
            <person name="Ring B.Z."/>
            <person name="Ringwald M."/>
            <person name="Rost B."/>
            <person name="Ruan Y."/>
            <person name="Salzberg S.L."/>
            <person name="Sandelin A."/>
            <person name="Schneider C."/>
            <person name="Schoenbach C."/>
            <person name="Sekiguchi K."/>
            <person name="Semple C.A."/>
            <person name="Seno S."/>
            <person name="Sessa L."/>
            <person name="Sheng Y."/>
            <person name="Shibata Y."/>
            <person name="Shimada H."/>
            <person name="Shimada K."/>
            <person name="Silva D."/>
            <person name="Sinclair B."/>
            <person name="Sperling S."/>
            <person name="Stupka E."/>
            <person name="Sugiura K."/>
            <person name="Sultana R."/>
            <person name="Takenaka Y."/>
            <person name="Taki K."/>
            <person name="Tammoja K."/>
            <person name="Tan S.L."/>
            <person name="Tang S."/>
            <person name="Taylor M.S."/>
            <person name="Tegner J."/>
            <person name="Teichmann S.A."/>
            <person name="Ueda H.R."/>
            <person name="van Nimwegen E."/>
            <person name="Verardo R."/>
            <person name="Wei C.L."/>
            <person name="Yagi K."/>
            <person name="Yamanishi H."/>
            <person name="Zabarovsky E."/>
            <person name="Zhu S."/>
            <person name="Zimmer A."/>
            <person name="Hide W."/>
            <person name="Bult C."/>
            <person name="Grimmond S.M."/>
            <person name="Teasdale R.D."/>
            <person name="Liu E.T."/>
            <person name="Brusic V."/>
            <person name="Quackenbush J."/>
            <person name="Wahlestedt C."/>
            <person name="Mattick J.S."/>
            <person name="Hume D.A."/>
            <person name="Kai C."/>
            <person name="Sasaki D."/>
            <person name="Tomaru Y."/>
            <person name="Fukuda S."/>
            <person name="Kanamori-Katayama M."/>
            <person name="Suzuki M."/>
            <person name="Aoki J."/>
            <person name="Arakawa T."/>
            <person name="Iida J."/>
            <person name="Imamura K."/>
            <person name="Itoh M."/>
            <person name="Kato T."/>
            <person name="Kawaji H."/>
            <person name="Kawagashira N."/>
            <person name="Kawashima T."/>
            <person name="Kojima M."/>
            <person name="Kondo S."/>
            <person name="Konno H."/>
            <person name="Nakano K."/>
            <person name="Ninomiya N."/>
            <person name="Nishio T."/>
            <person name="Okada M."/>
            <person name="Plessy C."/>
            <person name="Shibata K."/>
            <person name="Shiraki T."/>
            <person name="Suzuki S."/>
            <person name="Tagami M."/>
            <person name="Waki K."/>
            <person name="Watahiki A."/>
            <person name="Okamura-Oho Y."/>
            <person name="Suzuki H."/>
            <person name="Kawai J."/>
            <person name="Hayashizaki Y."/>
        </authorList>
    </citation>
    <scope>NUCLEOTIDE SEQUENCE [LARGE SCALE MRNA]</scope>
    <source>
        <strain>C57BL/6J</strain>
        <strain>NOD</strain>
        <tissue>Spleen</tissue>
    </source>
</reference>
<reference key="4">
    <citation type="journal article" date="2005" name="Cancer Res.">
        <title>Apoptosis factor EI24/PIG8 is a novel endoplasmic reticulum-localized Bcl-2-binding protein which is associated with suppression of breast cancer invasiveness.</title>
        <authorList>
            <person name="Zhao X."/>
            <person name="Ayer R.E."/>
            <person name="Davis S.L."/>
            <person name="Ames S.J."/>
            <person name="Florence B."/>
            <person name="Torchinsky C."/>
            <person name="Liou J.S."/>
            <person name="Shen L."/>
            <person name="Spanjaard R.A."/>
        </authorList>
    </citation>
    <scope>FUNCTION</scope>
    <scope>INTERACTION WITH BCL2</scope>
    <scope>SUBCELLULAR LOCATION</scope>
</reference>
<reference key="5">
    <citation type="journal article" date="2007" name="Mol. Cell. Proteomics">
        <title>Mitochondrial phosphoproteome revealed by an improved IMAC method and MS/MS/MS.</title>
        <authorList>
            <person name="Lee J."/>
            <person name="Xu Y."/>
            <person name="Chen Y."/>
            <person name="Sprung R."/>
            <person name="Kim S.C."/>
            <person name="Xie S."/>
            <person name="Zhao Y."/>
        </authorList>
    </citation>
    <scope>PHOSPHORYLATION [LARGE SCALE ANALYSIS] AT SER-56</scope>
    <scope>IDENTIFICATION BY MASS SPECTROMETRY [LARGE SCALE ANALYSIS]</scope>
    <source>
        <tissue>Liver</tissue>
    </source>
</reference>
<reference key="6">
    <citation type="journal article" date="2007" name="Proc. Natl. Acad. Sci. U.S.A.">
        <title>Large-scale phosphorylation analysis of mouse liver.</title>
        <authorList>
            <person name="Villen J."/>
            <person name="Beausoleil S.A."/>
            <person name="Gerber S.A."/>
            <person name="Gygi S.P."/>
        </authorList>
    </citation>
    <scope>PHOSPHORYLATION [LARGE SCALE ANALYSIS] AT SER-326</scope>
    <scope>IDENTIFICATION BY MASS SPECTROMETRY [LARGE SCALE ANALYSIS]</scope>
    <source>
        <tissue>Liver</tissue>
    </source>
</reference>
<reference key="7">
    <citation type="journal article" date="2010" name="Cell">
        <title>A tissue-specific atlas of mouse protein phosphorylation and expression.</title>
        <authorList>
            <person name="Huttlin E.L."/>
            <person name="Jedrychowski M.P."/>
            <person name="Elias J.E."/>
            <person name="Goswami T."/>
            <person name="Rad R."/>
            <person name="Beausoleil S.A."/>
            <person name="Villen J."/>
            <person name="Haas W."/>
            <person name="Sowa M.E."/>
            <person name="Gygi S.P."/>
        </authorList>
    </citation>
    <scope>PHOSPHORYLATION [LARGE SCALE ANALYSIS] AT SER-320; SER-326 AND SER-330</scope>
    <scope>IDENTIFICATION BY MASS SPECTROMETRY [LARGE SCALE ANALYSIS]</scope>
    <source>
        <tissue>Brain</tissue>
        <tissue>Brown adipose tissue</tissue>
        <tissue>Heart</tissue>
        <tissue>Kidney</tissue>
        <tissue>Liver</tissue>
        <tissue>Lung</tissue>
        <tissue>Pancreas</tissue>
        <tissue>Spleen</tissue>
        <tissue>Testis</tissue>
    </source>
</reference>
<gene>
    <name type="primary">Ei24</name>
    <name type="synonym">Pig8</name>
</gene>
<organism>
    <name type="scientific">Mus musculus</name>
    <name type="common">Mouse</name>
    <dbReference type="NCBI Taxonomy" id="10090"/>
    <lineage>
        <taxon>Eukaryota</taxon>
        <taxon>Metazoa</taxon>
        <taxon>Chordata</taxon>
        <taxon>Craniata</taxon>
        <taxon>Vertebrata</taxon>
        <taxon>Euteleostomi</taxon>
        <taxon>Mammalia</taxon>
        <taxon>Eutheria</taxon>
        <taxon>Euarchontoglires</taxon>
        <taxon>Glires</taxon>
        <taxon>Rodentia</taxon>
        <taxon>Myomorpha</taxon>
        <taxon>Muroidea</taxon>
        <taxon>Muridae</taxon>
        <taxon>Murinae</taxon>
        <taxon>Mus</taxon>
        <taxon>Mus</taxon>
    </lineage>
</organism>
<sequence length="340" mass="38933">MADSVKTFLQDLGRGIKDSIWGICTISKLDARIQQKREEQRRRRASSLLAQRRPQSVERKQESEPRIVSRIFQCCAWNGGVFWFSLLLFYRVFIPVLQSVTARIIGDPSLHGDVWSWLEFFLTSIFSALWVLPLFVLSKVVNAIWFQDIADLAFEVSGRKPHPFPSVSKIIADMLFNLLLQALFLIQGMFVSLFPIHLVGQLVSLLHMSLLYSLYCFEYRWFNKGIEMHQRLSNIERNWPYYFGFGLPLAFLTAMQSSYIISGCLFSILFPLFIISANEAKTPGKAYLFQLRLFSLVVFLSNRLFHKTVYLQSALSSSSSAEKFPSPHPSPAKLKAAAGH</sequence>